<organism>
    <name type="scientific">Caenorhabditis elegans</name>
    <dbReference type="NCBI Taxonomy" id="6239"/>
    <lineage>
        <taxon>Eukaryota</taxon>
        <taxon>Metazoa</taxon>
        <taxon>Ecdysozoa</taxon>
        <taxon>Nematoda</taxon>
        <taxon>Chromadorea</taxon>
        <taxon>Rhabditida</taxon>
        <taxon>Rhabditina</taxon>
        <taxon>Rhabditomorpha</taxon>
        <taxon>Rhabditoidea</taxon>
        <taxon>Rhabditidae</taxon>
        <taxon>Peloderinae</taxon>
        <taxon>Caenorhabditis</taxon>
    </lineage>
</organism>
<sequence>MGTSEHVPLPTDEAKAKELEQSQHSEEPDRGQWTGKFDFLMSMVAYAVGLGNVWRFPYLCYKNGGGSFLVVYMIFFCLAAVPIFLMEVTVGQYLQKGAMEMWLMCPLFRGVGIGNVVIAFMCIAYFCVIVAWAMFYMISSIAWVFPWETCNNYWNDATCVTGKENFTELARIKALVASAGGHTQTSVEQFWEKRVLHDTGDISEFGGIQWELFFIMAAAWLIVYFALWKGITQARKFVYFCALFPYVLIFILLIRGLTLEGAGTGIYFYLKPNATRLLDTAVWKDAGTQVFYSYGVGFGALIALGSHNKFNHNCFKDAITMCFINGCTSITAGFAVFSILGYMSHVAQKDISEIVKPGVGLAFLAYPEVASNLPMKQVFAVLFFLMITILGLDSQVCMMEGLFTALEDAFPILRKYKKQSLGIFCLFFFCIGIPMVTHSGSHWLTLFDAYGASGYALLFVVFFEVVGLAYGFGAHNIRKALHEMIGVTLPKGIEYVWKFCAPATSLVLFVFCVVYYHPVKYPDGKDFPFWANAFGWFLSSCSMVVIPGYAIYYLFFTNKHLTLKERVRKGLNLDGSFESPAKKNLVNNAEELKFIESSSQ</sequence>
<evidence type="ECO:0000250" key="1">
    <source>
        <dbReference type="UniProtKB" id="P48065"/>
    </source>
</evidence>
<evidence type="ECO:0000255" key="2"/>
<evidence type="ECO:0000256" key="3">
    <source>
        <dbReference type="SAM" id="MobiDB-lite"/>
    </source>
</evidence>
<evidence type="ECO:0000269" key="4">
    <source>
    </source>
</evidence>
<evidence type="ECO:0000269" key="5">
    <source>
    </source>
</evidence>
<evidence type="ECO:0000303" key="6">
    <source>
    </source>
</evidence>
<evidence type="ECO:0000305" key="7"/>
<evidence type="ECO:0000305" key="8">
    <source>
    </source>
</evidence>
<evidence type="ECO:0000312" key="9">
    <source>
        <dbReference type="EMBL" id="AAZ23105.1"/>
    </source>
</evidence>
<evidence type="ECO:0000312" key="10">
    <source>
        <dbReference type="EMBL" id="ABF20556.1"/>
    </source>
</evidence>
<evidence type="ECO:0000312" key="11">
    <source>
        <dbReference type="EMBL" id="CCD63487.1"/>
    </source>
</evidence>
<evidence type="ECO:0000312" key="12">
    <source>
        <dbReference type="WormBase" id="T13B5.1"/>
    </source>
</evidence>
<accession>G5EBN9</accession>
<comment type="function">
    <text evidence="5">Betaine transporter dependent on Na(+) and Cl(-) ions that functions primarily in the epidermis to clear betaine from the extracellular space. Elicits current in response to betaine but not in response to GABA, L-carnitine, sarcosine, glycine or dimethylglycine.</text>
</comment>
<comment type="subcellular location">
    <subcellularLocation>
        <location evidence="5">Cell membrane</location>
        <topology evidence="8">Multi-pass membrane protein</topology>
    </subcellularLocation>
</comment>
<comment type="tissue specificity">
    <text evidence="4 5">Highly expressed in the head, the excretory canal, tail hypodermal cells, epidermis and vulval epithelial cells. Expressed in the excretory canal-associated neuron and in some non-amphidial sensory neurons in the head (at protein level).</text>
</comment>
<comment type="disruption phenotype">
    <text evidence="5">Mutant worms are morphologically similar to the wild-type but exhibit mild swimming defects and are lethargic when crawling on a food-free environment with their movement being interrupted by frequent pauses. Worms paralyze in the presence of exogenous betaine. Simultaneous knockdown of snf-3 and egl-8 results in uncoordinated, hypercontracted and paralyzed animals.</text>
</comment>
<comment type="similarity">
    <text evidence="2">Belongs to the sodium:neurotransmitter symporter (SNF) family.</text>
</comment>
<dbReference type="EMBL" id="DQ482733">
    <property type="protein sequence ID" value="ABF20556.1"/>
    <property type="molecule type" value="mRNA"/>
</dbReference>
<dbReference type="EMBL" id="DQ118731">
    <property type="protein sequence ID" value="AAZ23105.1"/>
    <property type="molecule type" value="mRNA"/>
</dbReference>
<dbReference type="EMBL" id="FO080410">
    <property type="protein sequence ID" value="CCD63487.1"/>
    <property type="molecule type" value="Genomic_DNA"/>
</dbReference>
<dbReference type="PIR" id="T32456">
    <property type="entry name" value="T32456"/>
</dbReference>
<dbReference type="RefSeq" id="NP_493910.2">
    <property type="nucleotide sequence ID" value="NM_061509.7"/>
</dbReference>
<dbReference type="SMR" id="G5EBN9"/>
<dbReference type="BioGRID" id="38868">
    <property type="interactions" value="2"/>
</dbReference>
<dbReference type="FunCoup" id="G5EBN9">
    <property type="interactions" value="2"/>
</dbReference>
<dbReference type="STRING" id="6239.T13B5.1.1"/>
<dbReference type="GlyCosmos" id="G5EBN9">
    <property type="glycosylation" value="2 sites, No reported glycans"/>
</dbReference>
<dbReference type="PaxDb" id="6239-T13B5.1"/>
<dbReference type="PeptideAtlas" id="G5EBN9"/>
<dbReference type="EnsemblMetazoa" id="T13B5.1.1">
    <property type="protein sequence ID" value="T13B5.1.1"/>
    <property type="gene ID" value="WBGene00004902"/>
</dbReference>
<dbReference type="GeneID" id="173493"/>
<dbReference type="KEGG" id="cel:CELE_T13B5.1"/>
<dbReference type="AGR" id="WB:WBGene00004902"/>
<dbReference type="CTD" id="173493"/>
<dbReference type="WormBase" id="T13B5.1">
    <property type="protein sequence ID" value="CE30176"/>
    <property type="gene ID" value="WBGene00004902"/>
    <property type="gene designation" value="snf-3"/>
</dbReference>
<dbReference type="eggNOG" id="KOG3660">
    <property type="taxonomic scope" value="Eukaryota"/>
</dbReference>
<dbReference type="HOGENOM" id="CLU_006855_9_5_1"/>
<dbReference type="InParanoid" id="G5EBN9"/>
<dbReference type="OMA" id="CFINGCT"/>
<dbReference type="OrthoDB" id="6581954at2759"/>
<dbReference type="PhylomeDB" id="G5EBN9"/>
<dbReference type="PRO" id="PR:G5EBN9"/>
<dbReference type="Proteomes" id="UP000001940">
    <property type="component" value="Chromosome II"/>
</dbReference>
<dbReference type="Bgee" id="WBGene00004902">
    <property type="expression patterns" value="Expressed in larva and 3 other cell types or tissues"/>
</dbReference>
<dbReference type="GO" id="GO:0043005">
    <property type="term" value="C:neuron projection"/>
    <property type="evidence" value="ECO:0000318"/>
    <property type="project" value="GO_Central"/>
</dbReference>
<dbReference type="GO" id="GO:0005886">
    <property type="term" value="C:plasma membrane"/>
    <property type="evidence" value="ECO:0000318"/>
    <property type="project" value="GO_Central"/>
</dbReference>
<dbReference type="GO" id="GO:0015199">
    <property type="term" value="F:amino-acid betaine transmembrane transporter activity"/>
    <property type="evidence" value="ECO:0000314"/>
    <property type="project" value="WormBase"/>
</dbReference>
<dbReference type="GO" id="GO:0005332">
    <property type="term" value="F:gamma-aminobutyric acid:sodium:chloride symporter activity"/>
    <property type="evidence" value="ECO:0000318"/>
    <property type="project" value="GO_Central"/>
</dbReference>
<dbReference type="GO" id="GO:0006865">
    <property type="term" value="P:amino acid transport"/>
    <property type="evidence" value="ECO:0000318"/>
    <property type="project" value="GO_Central"/>
</dbReference>
<dbReference type="GO" id="GO:0015838">
    <property type="term" value="P:amino-acid betaine transport"/>
    <property type="evidence" value="ECO:0000314"/>
    <property type="project" value="WormBase"/>
</dbReference>
<dbReference type="GO" id="GO:0006836">
    <property type="term" value="P:neurotransmitter transport"/>
    <property type="evidence" value="ECO:0007669"/>
    <property type="project" value="UniProtKB-KW"/>
</dbReference>
<dbReference type="GO" id="GO:0035725">
    <property type="term" value="P:sodium ion transmembrane transport"/>
    <property type="evidence" value="ECO:0000318"/>
    <property type="project" value="GO_Central"/>
</dbReference>
<dbReference type="CDD" id="cd11496">
    <property type="entry name" value="SLC6sbd-TauT-like"/>
    <property type="match status" value="1"/>
</dbReference>
<dbReference type="InterPro" id="IPR000175">
    <property type="entry name" value="Na/ntran_symport"/>
</dbReference>
<dbReference type="InterPro" id="IPR037272">
    <property type="entry name" value="SNS_sf"/>
</dbReference>
<dbReference type="NCBIfam" id="NF037979">
    <property type="entry name" value="Na_transp"/>
    <property type="match status" value="1"/>
</dbReference>
<dbReference type="PANTHER" id="PTHR11616:SF20">
    <property type="entry name" value="SODIUM- AND CHLORIDE-DEPENDENT BETAINE TRANSPORTER"/>
    <property type="match status" value="1"/>
</dbReference>
<dbReference type="PANTHER" id="PTHR11616">
    <property type="entry name" value="SODIUM/CHLORIDE DEPENDENT TRANSPORTER"/>
    <property type="match status" value="1"/>
</dbReference>
<dbReference type="Pfam" id="PF00209">
    <property type="entry name" value="SNF"/>
    <property type="match status" value="1"/>
</dbReference>
<dbReference type="PRINTS" id="PR00176">
    <property type="entry name" value="NANEUSMPORT"/>
</dbReference>
<dbReference type="SUPFAM" id="SSF161070">
    <property type="entry name" value="SNF-like"/>
    <property type="match status" value="1"/>
</dbReference>
<dbReference type="PROSITE" id="PS00610">
    <property type="entry name" value="NA_NEUROTRAN_SYMP_1"/>
    <property type="match status" value="1"/>
</dbReference>
<dbReference type="PROSITE" id="PS50267">
    <property type="entry name" value="NA_NEUROTRAN_SYMP_3"/>
    <property type="match status" value="1"/>
</dbReference>
<reference evidence="7 10" key="1">
    <citation type="journal article" date="2006" name="Mol. Biol. Cell">
        <title>The Caenorhabditis elegans snf-11 gene encodes a sodium-dependent GABA transporter required for clearance of synaptic GABA.</title>
        <authorList>
            <person name="Mullen G.P."/>
            <person name="Mathews E.A."/>
            <person name="Saxena P."/>
            <person name="Fields S.D."/>
            <person name="McManus J.R."/>
            <person name="Moulder G."/>
            <person name="Barstead R.J."/>
            <person name="Quick M.W."/>
            <person name="Rand J.B."/>
        </authorList>
    </citation>
    <scope>NUCLEOTIDE SEQUENCE [MRNA]</scope>
    <scope>TISSUE SPECIFICITY</scope>
</reference>
<reference evidence="9" key="2">
    <citation type="submission" date="2005-07" db="EMBL/GenBank/DDBJ databases">
        <title>Molecular cloning and functional characteristics of a Na+/Cl--coupled betaine transporter, BGT-1, from Caenorhabditis elegans: Localization in hypodermis and intestine and involvement in osmo-regulation.</title>
        <authorList>
            <person name="Jiang G.-L."/>
            <person name="Ganapathy V."/>
            <person name="Fei Y.-J."/>
        </authorList>
    </citation>
    <scope>NUCLEOTIDE SEQUENCE [MRNA]</scope>
</reference>
<reference evidence="11" key="3">
    <citation type="journal article" date="1998" name="Science">
        <title>Genome sequence of the nematode C. elegans: a platform for investigating biology.</title>
        <authorList>
            <consortium name="The C. elegans sequencing consortium"/>
        </authorList>
    </citation>
    <scope>NUCLEOTIDE SEQUENCE [LARGE SCALE GENOMIC DNA]</scope>
    <source>
        <strain evidence="11">Bristol N2</strain>
    </source>
</reference>
<reference evidence="7" key="4">
    <citation type="journal article" date="2013" name="Nat. Neurosci.">
        <title>Betaine acts on a ligand-gated ion channel in the nervous system of the nematode C. elegans.</title>
        <authorList>
            <person name="Peden A.S."/>
            <person name="Mac P."/>
            <person name="Fei Y.J."/>
            <person name="Castro C."/>
            <person name="Jiang G."/>
            <person name="Murfitt K.J."/>
            <person name="Miska E.A."/>
            <person name="Griffin J.L."/>
            <person name="Ganapathy V."/>
            <person name="Jorgensen E.M."/>
        </authorList>
    </citation>
    <scope>FUNCTION</scope>
    <scope>SUBCELLULAR LOCATION</scope>
    <scope>TISSUE SPECIFICITY</scope>
    <scope>DISRUPTION PHENOTYPE</scope>
    <source>
        <strain evidence="5">Bristol N2</strain>
    </source>
</reference>
<keyword id="KW-1003">Cell membrane</keyword>
<keyword id="KW-0325">Glycoprotein</keyword>
<keyword id="KW-0472">Membrane</keyword>
<keyword id="KW-0532">Neurotransmitter transport</keyword>
<keyword id="KW-1185">Reference proteome</keyword>
<keyword id="KW-0769">Symport</keyword>
<keyword id="KW-0812">Transmembrane</keyword>
<keyword id="KW-1133">Transmembrane helix</keyword>
<keyword id="KW-0813">Transport</keyword>
<protein>
    <recommendedName>
        <fullName evidence="1">Sodium- and chloride-dependent betaine transporter</fullName>
    </recommendedName>
    <alternativeName>
        <fullName evidence="6">Betaine transporter SNF-3</fullName>
    </alternativeName>
    <alternativeName>
        <fullName evidence="1">Na(+)/Cl(-) betaine/GABA transporter</fullName>
    </alternativeName>
    <alternativeName>
        <fullName>Sodium:neurotransmitter symporter family protein 3</fullName>
    </alternativeName>
</protein>
<proteinExistence type="evidence at protein level"/>
<name>SNF3_CAEEL</name>
<gene>
    <name evidence="11 12" type="primary">snf-3</name>
    <name evidence="9" type="synonym">bgt-1</name>
    <name type="ORF">T13B5.1</name>
</gene>
<feature type="chain" id="PRO_0000425865" description="Sodium- and chloride-dependent betaine transporter">
    <location>
        <begin position="1"/>
        <end position="600"/>
    </location>
</feature>
<feature type="topological domain" description="Cytoplasmic" evidence="2">
    <location>
        <begin position="1"/>
        <end position="38"/>
    </location>
</feature>
<feature type="transmembrane region" description="Helical; Name=1" evidence="2">
    <location>
        <begin position="39"/>
        <end position="59"/>
    </location>
</feature>
<feature type="transmembrane region" description="Helical; Name=2" evidence="2">
    <location>
        <begin position="68"/>
        <end position="88"/>
    </location>
</feature>
<feature type="transmembrane region" description="Helical; Name=3" evidence="2">
    <location>
        <begin position="116"/>
        <end position="136"/>
    </location>
</feature>
<feature type="topological domain" description="Extracellular" evidence="2">
    <location>
        <begin position="137"/>
        <end position="207"/>
    </location>
</feature>
<feature type="transmembrane region" description="Helical; Name=4" evidence="2">
    <location>
        <begin position="208"/>
        <end position="228"/>
    </location>
</feature>
<feature type="transmembrane region" description="Helical; Name=5" evidence="2">
    <location>
        <begin position="237"/>
        <end position="257"/>
    </location>
</feature>
<feature type="transmembrane region" description="Helical; Name=6" evidence="2">
    <location>
        <begin position="286"/>
        <end position="306"/>
    </location>
</feature>
<feature type="transmembrane region" description="Helical; Name=7" evidence="2">
    <location>
        <begin position="321"/>
        <end position="341"/>
    </location>
</feature>
<feature type="transmembrane region" description="Helical; Name=8" evidence="2">
    <location>
        <begin position="378"/>
        <end position="398"/>
    </location>
</feature>
<feature type="transmembrane region" description="Helical; Name=9" evidence="2">
    <location>
        <begin position="420"/>
        <end position="440"/>
    </location>
</feature>
<feature type="transmembrane region" description="Helical; Name=10" evidence="2">
    <location>
        <begin position="454"/>
        <end position="474"/>
    </location>
</feature>
<feature type="transmembrane region" description="Helical; Name=11" evidence="2">
    <location>
        <begin position="499"/>
        <end position="519"/>
    </location>
</feature>
<feature type="transmembrane region" description="Helical; Name=12" evidence="2">
    <location>
        <begin position="536"/>
        <end position="556"/>
    </location>
</feature>
<feature type="topological domain" description="Cytoplasmic" evidence="2">
    <location>
        <begin position="557"/>
        <end position="600"/>
    </location>
</feature>
<feature type="region of interest" description="Disordered" evidence="3">
    <location>
        <begin position="1"/>
        <end position="31"/>
    </location>
</feature>
<feature type="compositionally biased region" description="Basic and acidic residues" evidence="3">
    <location>
        <begin position="12"/>
        <end position="30"/>
    </location>
</feature>
<feature type="glycosylation site" description="N-linked (GlcNAc...) asparagine" evidence="2">
    <location>
        <position position="165"/>
    </location>
</feature>
<feature type="glycosylation site" description="N-linked (GlcNAc...) asparagine" evidence="2">
    <location>
        <position position="273"/>
    </location>
</feature>